<evidence type="ECO:0000250" key="1">
    <source>
        <dbReference type="UniProtKB" id="P11411"/>
    </source>
</evidence>
<evidence type="ECO:0000250" key="2">
    <source>
        <dbReference type="UniProtKB" id="P11413"/>
    </source>
</evidence>
<evidence type="ECO:0000305" key="3"/>
<reference key="1">
    <citation type="submission" date="1995-06" db="EMBL/GenBank/DDBJ databases">
        <title>G6PD-promoter activity in A. niger.</title>
        <authorList>
            <person name="Thamm A."/>
        </authorList>
    </citation>
    <scope>NUCLEOTIDE SEQUENCE [MRNA]</scope>
    <source>
        <strain>ATCC 9029 / NRRL 3 / CBS 120.49 / DSM 2466 / N400 / FGSC 732</strain>
    </source>
</reference>
<reference key="2">
    <citation type="journal article" date="1995" name="Mol. Gen. Genet.">
        <title>Isolation and characterization of the glucose-6-phosphate dehydrogenase encoding gene (gsdA) from Aspergillus niger.</title>
        <authorList>
            <person name="van den Broek P."/>
            <person name="Goosen T."/>
            <person name="Wennekes B."/>
            <person name="van den Broek H."/>
        </authorList>
    </citation>
    <scope>NUCLEOTIDE SEQUENCE [GENOMIC DNA]</scope>
    <source>
        <strain>ATCC 9029 / NRRL 3 / CBS 120.49 / DSM 2466 / N400 / FGSC 732</strain>
    </source>
</reference>
<keyword id="KW-0119">Carbohydrate metabolism</keyword>
<keyword id="KW-0313">Glucose metabolism</keyword>
<keyword id="KW-0521">NADP</keyword>
<keyword id="KW-0560">Oxidoreductase</keyword>
<accession>P48826</accession>
<name>G6PD_ASPNG</name>
<proteinExistence type="evidence at transcript level"/>
<comment type="function">
    <text evidence="2">Catalyzes the rate-limiting step of the oxidative pentose-phosphate pathway, which represents a route for the dissimilation of carbohydrates besides glycolysis. The main function of this enzyme is to provide reducing power (NADPH) and pentose phosphates for fatty acid and nucleic acid synthesis (By similarity).</text>
</comment>
<comment type="catalytic activity">
    <reaction evidence="2">
        <text>D-glucose 6-phosphate + NADP(+) = 6-phospho-D-glucono-1,5-lactone + NADPH + H(+)</text>
        <dbReference type="Rhea" id="RHEA:15841"/>
        <dbReference type="ChEBI" id="CHEBI:15378"/>
        <dbReference type="ChEBI" id="CHEBI:57783"/>
        <dbReference type="ChEBI" id="CHEBI:57955"/>
        <dbReference type="ChEBI" id="CHEBI:58349"/>
        <dbReference type="ChEBI" id="CHEBI:61548"/>
        <dbReference type="EC" id="1.1.1.49"/>
    </reaction>
</comment>
<comment type="pathway">
    <text evidence="3">Carbohydrate degradation; pentose phosphate pathway; D-ribulose 5-phosphate from D-glucose 6-phosphate (oxidative stage): step 1/3.</text>
</comment>
<comment type="similarity">
    <text evidence="3">Belongs to the glucose-6-phosphate dehydrogenase family.</text>
</comment>
<sequence>MASTIARTEERQNAGTMELKDDTVIIVLGASGDLAKKKTFPALFGLYRNKFLPKGIKIVGYARTNMDHEEYLRRVRSYIKTPTKEIEEQLDSFCQFCTYISGQYDKDDSFINLNKHLEEIEKGQKEQNRIYYMALPPSVFTTVSDQLKRNCYPKNGVARIIVEKPFGKDLQSSRDLQKALEPNWKEEEIFRIDHYLGKEMVKNILIMRFGNEFFNATWNRHHIDNVQITFKEPFGTEGRGGYFDEFGIIRDVMQNHLLQVLTLLAMERPISFSAEDIRDEKVRVLRAMDAIEPKNVIIGQYGKSLDGSKPAYKEDETVPQDSRCPTFCAMVAYIKNERWDGVPFIMKAGKALNEQKTEIRIQFRDVTSGIFKDIPRNELVIRVQPNESVYIKMNSKLPGLSMQTVVTELDLTYRRRFSDLKIPEAYESLILDALKGDHSNFVRDDELDASWRIFTPLLHYLDDNKEIIPMEYPYGSRGPAVLDDFTASFGYKFSDAAGYQWPLTSTPNRL</sequence>
<dbReference type="EC" id="1.1.1.49" evidence="2"/>
<dbReference type="EMBL" id="X87942">
    <property type="protein sequence ID" value="CAA61194.1"/>
    <property type="molecule type" value="mRNA"/>
</dbReference>
<dbReference type="EMBL" id="X77829">
    <property type="protein sequence ID" value="CAA54840.1"/>
    <property type="molecule type" value="Genomic_DNA"/>
</dbReference>
<dbReference type="PIR" id="S54720">
    <property type="entry name" value="S54720"/>
</dbReference>
<dbReference type="RefSeq" id="XP_001400342.1">
    <property type="nucleotide sequence ID" value="XM_001400305.3"/>
</dbReference>
<dbReference type="SMR" id="P48826"/>
<dbReference type="PaxDb" id="5061-CADANGAP00002664"/>
<dbReference type="EnsemblFungi" id="CAK37895">
    <property type="protein sequence ID" value="CAK37895"/>
    <property type="gene ID" value="An02g12140"/>
</dbReference>
<dbReference type="GeneID" id="4979751"/>
<dbReference type="KEGG" id="ang:An02g12140"/>
<dbReference type="VEuPathDB" id="FungiDB:An02g12140"/>
<dbReference type="VEuPathDB" id="FungiDB:ASPNIDRAFT2_1145051"/>
<dbReference type="VEuPathDB" id="FungiDB:ATCC64974_53050"/>
<dbReference type="VEuPathDB" id="FungiDB:M747DRAFT_293654"/>
<dbReference type="eggNOG" id="KOG0563">
    <property type="taxonomic scope" value="Eukaryota"/>
</dbReference>
<dbReference type="OrthoDB" id="60984at2759"/>
<dbReference type="UniPathway" id="UPA00115">
    <property type="reaction ID" value="UER00408"/>
</dbReference>
<dbReference type="GO" id="GO:0005829">
    <property type="term" value="C:cytosol"/>
    <property type="evidence" value="ECO:0007669"/>
    <property type="project" value="TreeGrafter"/>
</dbReference>
<dbReference type="GO" id="GO:0004345">
    <property type="term" value="F:glucose-6-phosphate dehydrogenase activity"/>
    <property type="evidence" value="ECO:0007669"/>
    <property type="project" value="UniProtKB-EC"/>
</dbReference>
<dbReference type="GO" id="GO:0050661">
    <property type="term" value="F:NADP binding"/>
    <property type="evidence" value="ECO:0007669"/>
    <property type="project" value="InterPro"/>
</dbReference>
<dbReference type="GO" id="GO:0006006">
    <property type="term" value="P:glucose metabolic process"/>
    <property type="evidence" value="ECO:0007669"/>
    <property type="project" value="UniProtKB-KW"/>
</dbReference>
<dbReference type="GO" id="GO:0009051">
    <property type="term" value="P:pentose-phosphate shunt, oxidative branch"/>
    <property type="evidence" value="ECO:0007669"/>
    <property type="project" value="TreeGrafter"/>
</dbReference>
<dbReference type="FunFam" id="3.30.360.10:FF:000015">
    <property type="entry name" value="Glucose-6-phosphate 1-dehydrogenase"/>
    <property type="match status" value="1"/>
</dbReference>
<dbReference type="FunFam" id="3.40.50.720:FF:000111">
    <property type="entry name" value="Glucose-6-phosphate 1-dehydrogenase"/>
    <property type="match status" value="1"/>
</dbReference>
<dbReference type="Gene3D" id="3.30.360.10">
    <property type="entry name" value="Dihydrodipicolinate Reductase, domain 2"/>
    <property type="match status" value="1"/>
</dbReference>
<dbReference type="Gene3D" id="3.40.50.720">
    <property type="entry name" value="NAD(P)-binding Rossmann-like Domain"/>
    <property type="match status" value="1"/>
</dbReference>
<dbReference type="HAMAP" id="MF_00966">
    <property type="entry name" value="G6PD"/>
    <property type="match status" value="1"/>
</dbReference>
<dbReference type="InterPro" id="IPR001282">
    <property type="entry name" value="G6P_DH"/>
</dbReference>
<dbReference type="InterPro" id="IPR019796">
    <property type="entry name" value="G6P_DH_AS"/>
</dbReference>
<dbReference type="InterPro" id="IPR022675">
    <property type="entry name" value="G6P_DH_C"/>
</dbReference>
<dbReference type="InterPro" id="IPR022674">
    <property type="entry name" value="G6P_DH_NAD-bd"/>
</dbReference>
<dbReference type="InterPro" id="IPR036291">
    <property type="entry name" value="NAD(P)-bd_dom_sf"/>
</dbReference>
<dbReference type="NCBIfam" id="TIGR00871">
    <property type="entry name" value="zwf"/>
    <property type="match status" value="1"/>
</dbReference>
<dbReference type="PANTHER" id="PTHR23429:SF0">
    <property type="entry name" value="GLUCOSE-6-PHOSPHATE 1-DEHYDROGENASE"/>
    <property type="match status" value="1"/>
</dbReference>
<dbReference type="PANTHER" id="PTHR23429">
    <property type="entry name" value="GLUCOSE-6-PHOSPHATE 1-DEHYDROGENASE G6PD"/>
    <property type="match status" value="1"/>
</dbReference>
<dbReference type="Pfam" id="PF02781">
    <property type="entry name" value="G6PD_C"/>
    <property type="match status" value="1"/>
</dbReference>
<dbReference type="Pfam" id="PF00479">
    <property type="entry name" value="G6PD_N"/>
    <property type="match status" value="1"/>
</dbReference>
<dbReference type="PIRSF" id="PIRSF000110">
    <property type="entry name" value="G6PD"/>
    <property type="match status" value="1"/>
</dbReference>
<dbReference type="PRINTS" id="PR00079">
    <property type="entry name" value="G6PDHDRGNASE"/>
</dbReference>
<dbReference type="SUPFAM" id="SSF55347">
    <property type="entry name" value="Glyceraldehyde-3-phosphate dehydrogenase-like, C-terminal domain"/>
    <property type="match status" value="1"/>
</dbReference>
<dbReference type="SUPFAM" id="SSF51735">
    <property type="entry name" value="NAD(P)-binding Rossmann-fold domains"/>
    <property type="match status" value="1"/>
</dbReference>
<dbReference type="PROSITE" id="PS00069">
    <property type="entry name" value="G6P_DEHYDROGENASE"/>
    <property type="match status" value="1"/>
</dbReference>
<feature type="chain" id="PRO_0000068102" description="Glucose-6-phosphate 1-dehydrogenase">
    <location>
        <begin position="1"/>
        <end position="510"/>
    </location>
</feature>
<feature type="active site" description="Proton acceptor" evidence="1">
    <location>
        <position position="256"/>
    </location>
</feature>
<feature type="binding site" evidence="2">
    <location>
        <begin position="29"/>
        <end position="36"/>
    </location>
    <ligand>
        <name>NADP(+)</name>
        <dbReference type="ChEBI" id="CHEBI:58349"/>
        <label>1</label>
    </ligand>
</feature>
<feature type="binding site" evidence="2">
    <location>
        <position position="63"/>
    </location>
    <ligand>
        <name>NADP(+)</name>
        <dbReference type="ChEBI" id="CHEBI:58349"/>
        <label>1</label>
    </ligand>
</feature>
<feature type="binding site" evidence="2">
    <location>
        <position position="164"/>
    </location>
    <ligand>
        <name>D-glucose 6-phosphate</name>
        <dbReference type="ChEBI" id="CHEBI:61548"/>
    </ligand>
</feature>
<feature type="binding site" evidence="2">
    <location>
        <position position="164"/>
    </location>
    <ligand>
        <name>NADP(+)</name>
        <dbReference type="ChEBI" id="CHEBI:58349"/>
        <label>1</label>
    </ligand>
</feature>
<feature type="binding site" evidence="2">
    <location>
        <begin position="194"/>
        <end position="198"/>
    </location>
    <ligand>
        <name>D-glucose 6-phosphate</name>
        <dbReference type="ChEBI" id="CHEBI:61548"/>
    </ligand>
</feature>
<feature type="binding site" evidence="2">
    <location>
        <position position="232"/>
    </location>
    <ligand>
        <name>D-glucose 6-phosphate</name>
        <dbReference type="ChEBI" id="CHEBI:61548"/>
    </ligand>
</feature>
<feature type="binding site" evidence="2">
    <location>
        <position position="251"/>
    </location>
    <ligand>
        <name>D-glucose 6-phosphate</name>
        <dbReference type="ChEBI" id="CHEBI:61548"/>
    </ligand>
</feature>
<feature type="binding site" evidence="2">
    <location>
        <position position="347"/>
    </location>
    <ligand>
        <name>NADP(+)</name>
        <dbReference type="ChEBI" id="CHEBI:58349"/>
        <label>2</label>
    </ligand>
</feature>
<feature type="binding site" evidence="2">
    <location>
        <position position="350"/>
    </location>
    <ligand>
        <name>D-glucose 6-phosphate</name>
        <dbReference type="ChEBI" id="CHEBI:61548"/>
    </ligand>
</feature>
<feature type="binding site" evidence="2">
    <location>
        <position position="356"/>
    </location>
    <ligand>
        <name>NADP(+)</name>
        <dbReference type="ChEBI" id="CHEBI:58349"/>
        <label>2</label>
    </ligand>
</feature>
<feature type="binding site" evidence="2">
    <location>
        <position position="360"/>
    </location>
    <ligand>
        <name>NADP(+)</name>
        <dbReference type="ChEBI" id="CHEBI:58349"/>
        <label>2</label>
    </ligand>
</feature>
<feature type="binding site" evidence="2">
    <location>
        <position position="382"/>
    </location>
    <ligand>
        <name>NADP(+)</name>
        <dbReference type="ChEBI" id="CHEBI:58349"/>
        <label>2</label>
    </ligand>
</feature>
<feature type="binding site" evidence="2">
    <location>
        <position position="384"/>
    </location>
    <ligand>
        <name>D-glucose 6-phosphate</name>
        <dbReference type="ChEBI" id="CHEBI:61548"/>
    </ligand>
</feature>
<feature type="binding site" evidence="2">
    <location>
        <begin position="390"/>
        <end position="392"/>
    </location>
    <ligand>
        <name>NADP(+)</name>
        <dbReference type="ChEBI" id="CHEBI:58349"/>
        <label>2</label>
    </ligand>
</feature>
<feature type="binding site" evidence="2">
    <location>
        <begin position="410"/>
        <end position="412"/>
    </location>
    <ligand>
        <name>NADP(+)</name>
        <dbReference type="ChEBI" id="CHEBI:58349"/>
        <label>2</label>
    </ligand>
</feature>
<feature type="binding site" evidence="2">
    <location>
        <position position="477"/>
    </location>
    <ligand>
        <name>NADP(+)</name>
        <dbReference type="ChEBI" id="CHEBI:58349"/>
        <label>2</label>
    </ligand>
</feature>
<feature type="sequence conflict" description="In Ref. 2; CAA54840." evidence="3" ref="2">
    <original>L</original>
    <variation>F</variation>
    <location>
        <position position="135"/>
    </location>
</feature>
<feature type="sequence conflict" description="In Ref. 2; CAA54840." evidence="3" ref="2">
    <original>NRL</original>
    <variation>TVCK</variation>
    <location>
        <begin position="508"/>
        <end position="510"/>
    </location>
</feature>
<organism>
    <name type="scientific">Aspergillus niger</name>
    <dbReference type="NCBI Taxonomy" id="5061"/>
    <lineage>
        <taxon>Eukaryota</taxon>
        <taxon>Fungi</taxon>
        <taxon>Dikarya</taxon>
        <taxon>Ascomycota</taxon>
        <taxon>Pezizomycotina</taxon>
        <taxon>Eurotiomycetes</taxon>
        <taxon>Eurotiomycetidae</taxon>
        <taxon>Eurotiales</taxon>
        <taxon>Aspergillaceae</taxon>
        <taxon>Aspergillus</taxon>
        <taxon>Aspergillus subgen. Circumdati</taxon>
    </lineage>
</organism>
<protein>
    <recommendedName>
        <fullName>Glucose-6-phosphate 1-dehydrogenase</fullName>
        <shortName>G6PD</shortName>
        <ecNumber evidence="2">1.1.1.49</ecNumber>
    </recommendedName>
</protein>
<gene>
    <name type="primary">gsdA</name>
    <name type="synonym">g6pdh</name>
</gene>